<name>TBC24_MOUSE</name>
<gene>
    <name type="primary">Tbc1d24</name>
    <name type="synonym">Kiaa1171</name>
</gene>
<accession>Q3UUG6</accession>
<accession>A5D6Q7</accession>
<accession>Q3TTZ8</accession>
<accession>Q3UH11</accession>
<accession>Q6ZPW4</accession>
<accession>Q8BH92</accession>
<accession>Q8BNF2</accession>
<accession>Q8C3C6</accession>
<accession>Q8C3W8</accession>
<reference key="1">
    <citation type="journal article" date="2003" name="DNA Res.">
        <title>Prediction of the coding sequences of mouse homologues of KIAA gene: III. The complete nucleotide sequences of 500 mouse KIAA-homologous cDNAs identified by screening of terminal sequences of cDNA clones randomly sampled from size-fractionated libraries.</title>
        <authorList>
            <person name="Okazaki N."/>
            <person name="Kikuno R."/>
            <person name="Ohara R."/>
            <person name="Inamoto S."/>
            <person name="Koseki H."/>
            <person name="Hiraoka S."/>
            <person name="Saga Y."/>
            <person name="Nagase T."/>
            <person name="Ohara O."/>
            <person name="Koga H."/>
        </authorList>
    </citation>
    <scope>NUCLEOTIDE SEQUENCE [LARGE SCALE MRNA] (ISOFORM 2)</scope>
    <source>
        <tissue>Embryonic tail</tissue>
    </source>
</reference>
<reference key="2">
    <citation type="journal article" date="2005" name="Science">
        <title>The transcriptional landscape of the mammalian genome.</title>
        <authorList>
            <person name="Carninci P."/>
            <person name="Kasukawa T."/>
            <person name="Katayama S."/>
            <person name="Gough J."/>
            <person name="Frith M.C."/>
            <person name="Maeda N."/>
            <person name="Oyama R."/>
            <person name="Ravasi T."/>
            <person name="Lenhard B."/>
            <person name="Wells C."/>
            <person name="Kodzius R."/>
            <person name="Shimokawa K."/>
            <person name="Bajic V.B."/>
            <person name="Brenner S.E."/>
            <person name="Batalov S."/>
            <person name="Forrest A.R."/>
            <person name="Zavolan M."/>
            <person name="Davis M.J."/>
            <person name="Wilming L.G."/>
            <person name="Aidinis V."/>
            <person name="Allen J.E."/>
            <person name="Ambesi-Impiombato A."/>
            <person name="Apweiler R."/>
            <person name="Aturaliya R.N."/>
            <person name="Bailey T.L."/>
            <person name="Bansal M."/>
            <person name="Baxter L."/>
            <person name="Beisel K.W."/>
            <person name="Bersano T."/>
            <person name="Bono H."/>
            <person name="Chalk A.M."/>
            <person name="Chiu K.P."/>
            <person name="Choudhary V."/>
            <person name="Christoffels A."/>
            <person name="Clutterbuck D.R."/>
            <person name="Crowe M.L."/>
            <person name="Dalla E."/>
            <person name="Dalrymple B.P."/>
            <person name="de Bono B."/>
            <person name="Della Gatta G."/>
            <person name="di Bernardo D."/>
            <person name="Down T."/>
            <person name="Engstrom P."/>
            <person name="Fagiolini M."/>
            <person name="Faulkner G."/>
            <person name="Fletcher C.F."/>
            <person name="Fukushima T."/>
            <person name="Furuno M."/>
            <person name="Futaki S."/>
            <person name="Gariboldi M."/>
            <person name="Georgii-Hemming P."/>
            <person name="Gingeras T.R."/>
            <person name="Gojobori T."/>
            <person name="Green R.E."/>
            <person name="Gustincich S."/>
            <person name="Harbers M."/>
            <person name="Hayashi Y."/>
            <person name="Hensch T.K."/>
            <person name="Hirokawa N."/>
            <person name="Hill D."/>
            <person name="Huminiecki L."/>
            <person name="Iacono M."/>
            <person name="Ikeo K."/>
            <person name="Iwama A."/>
            <person name="Ishikawa T."/>
            <person name="Jakt M."/>
            <person name="Kanapin A."/>
            <person name="Katoh M."/>
            <person name="Kawasawa Y."/>
            <person name="Kelso J."/>
            <person name="Kitamura H."/>
            <person name="Kitano H."/>
            <person name="Kollias G."/>
            <person name="Krishnan S.P."/>
            <person name="Kruger A."/>
            <person name="Kummerfeld S.K."/>
            <person name="Kurochkin I.V."/>
            <person name="Lareau L.F."/>
            <person name="Lazarevic D."/>
            <person name="Lipovich L."/>
            <person name="Liu J."/>
            <person name="Liuni S."/>
            <person name="McWilliam S."/>
            <person name="Madan Babu M."/>
            <person name="Madera M."/>
            <person name="Marchionni L."/>
            <person name="Matsuda H."/>
            <person name="Matsuzawa S."/>
            <person name="Miki H."/>
            <person name="Mignone F."/>
            <person name="Miyake S."/>
            <person name="Morris K."/>
            <person name="Mottagui-Tabar S."/>
            <person name="Mulder N."/>
            <person name="Nakano N."/>
            <person name="Nakauchi H."/>
            <person name="Ng P."/>
            <person name="Nilsson R."/>
            <person name="Nishiguchi S."/>
            <person name="Nishikawa S."/>
            <person name="Nori F."/>
            <person name="Ohara O."/>
            <person name="Okazaki Y."/>
            <person name="Orlando V."/>
            <person name="Pang K.C."/>
            <person name="Pavan W.J."/>
            <person name="Pavesi G."/>
            <person name="Pesole G."/>
            <person name="Petrovsky N."/>
            <person name="Piazza S."/>
            <person name="Reed J."/>
            <person name="Reid J.F."/>
            <person name="Ring B.Z."/>
            <person name="Ringwald M."/>
            <person name="Rost B."/>
            <person name="Ruan Y."/>
            <person name="Salzberg S.L."/>
            <person name="Sandelin A."/>
            <person name="Schneider C."/>
            <person name="Schoenbach C."/>
            <person name="Sekiguchi K."/>
            <person name="Semple C.A."/>
            <person name="Seno S."/>
            <person name="Sessa L."/>
            <person name="Sheng Y."/>
            <person name="Shibata Y."/>
            <person name="Shimada H."/>
            <person name="Shimada K."/>
            <person name="Silva D."/>
            <person name="Sinclair B."/>
            <person name="Sperling S."/>
            <person name="Stupka E."/>
            <person name="Sugiura K."/>
            <person name="Sultana R."/>
            <person name="Takenaka Y."/>
            <person name="Taki K."/>
            <person name="Tammoja K."/>
            <person name="Tan S.L."/>
            <person name="Tang S."/>
            <person name="Taylor M.S."/>
            <person name="Tegner J."/>
            <person name="Teichmann S.A."/>
            <person name="Ueda H.R."/>
            <person name="van Nimwegen E."/>
            <person name="Verardo R."/>
            <person name="Wei C.L."/>
            <person name="Yagi K."/>
            <person name="Yamanishi H."/>
            <person name="Zabarovsky E."/>
            <person name="Zhu S."/>
            <person name="Zimmer A."/>
            <person name="Hide W."/>
            <person name="Bult C."/>
            <person name="Grimmond S.M."/>
            <person name="Teasdale R.D."/>
            <person name="Liu E.T."/>
            <person name="Brusic V."/>
            <person name="Quackenbush J."/>
            <person name="Wahlestedt C."/>
            <person name="Mattick J.S."/>
            <person name="Hume D.A."/>
            <person name="Kai C."/>
            <person name="Sasaki D."/>
            <person name="Tomaru Y."/>
            <person name="Fukuda S."/>
            <person name="Kanamori-Katayama M."/>
            <person name="Suzuki M."/>
            <person name="Aoki J."/>
            <person name="Arakawa T."/>
            <person name="Iida J."/>
            <person name="Imamura K."/>
            <person name="Itoh M."/>
            <person name="Kato T."/>
            <person name="Kawaji H."/>
            <person name="Kawagashira N."/>
            <person name="Kawashima T."/>
            <person name="Kojima M."/>
            <person name="Kondo S."/>
            <person name="Konno H."/>
            <person name="Nakano K."/>
            <person name="Ninomiya N."/>
            <person name="Nishio T."/>
            <person name="Okada M."/>
            <person name="Plessy C."/>
            <person name="Shibata K."/>
            <person name="Shiraki T."/>
            <person name="Suzuki S."/>
            <person name="Tagami M."/>
            <person name="Waki K."/>
            <person name="Watahiki A."/>
            <person name="Okamura-Oho Y."/>
            <person name="Suzuki H."/>
            <person name="Kawai J."/>
            <person name="Hayashizaki Y."/>
        </authorList>
    </citation>
    <scope>NUCLEOTIDE SEQUENCE [LARGE SCALE MRNA] (ISOFORMS 1 AND 2)</scope>
    <source>
        <strain>C57BL/6J</strain>
        <tissue>Brain</tissue>
        <tissue>Head</tissue>
        <tissue>Heart</tissue>
        <tissue>Hypothalamus</tissue>
        <tissue>Skin</tissue>
        <tissue>Spinal cord</tissue>
        <tissue>Spinal ganglion</tissue>
    </source>
</reference>
<reference key="3">
    <citation type="journal article" date="2004" name="Genome Res.">
        <title>The status, quality, and expansion of the NIH full-length cDNA project: the Mammalian Gene Collection (MGC).</title>
        <authorList>
            <consortium name="The MGC Project Team"/>
        </authorList>
    </citation>
    <scope>NUCLEOTIDE SEQUENCE [LARGE SCALE MRNA] (ISOFORM 2)</scope>
    <source>
        <strain>C57BL/6J</strain>
        <tissue>Brain</tissue>
    </source>
</reference>
<reference key="4">
    <citation type="journal article" date="2010" name="Am. J. Hum. Genet.">
        <title>TBC1D24, an ARF6-interacting protein, is mutated in familial infantile myoclonic epilepsy.</title>
        <authorList>
            <person name="Falace A."/>
            <person name="Filipello F."/>
            <person name="La Padula V."/>
            <person name="Vanni N."/>
            <person name="Madia F."/>
            <person name="De Pietri Tonelli D."/>
            <person name="de Falco F.A."/>
            <person name="Striano P."/>
            <person name="Dagna Bricarelli F."/>
            <person name="Minetti C."/>
            <person name="Benfenati F."/>
            <person name="Fassio A."/>
            <person name="Zara F."/>
        </authorList>
    </citation>
    <scope>FUNCTION</scope>
    <scope>TISSUE SPECIFICITY</scope>
</reference>
<reference key="5">
    <citation type="journal article" date="2010" name="Cell">
        <title>A tissue-specific atlas of mouse protein phosphorylation and expression.</title>
        <authorList>
            <person name="Huttlin E.L."/>
            <person name="Jedrychowski M.P."/>
            <person name="Elias J.E."/>
            <person name="Goswami T."/>
            <person name="Rad R."/>
            <person name="Beausoleil S.A."/>
            <person name="Villen J."/>
            <person name="Haas W."/>
            <person name="Sowa M.E."/>
            <person name="Gygi S.P."/>
        </authorList>
    </citation>
    <scope>PHOSPHORYLATION [LARGE SCALE ANALYSIS] AT SER-482</scope>
    <scope>IDENTIFICATION BY MASS SPECTROMETRY [LARGE SCALE ANALYSIS]</scope>
    <source>
        <tissue>Kidney</tissue>
        <tissue>Pancreas</tissue>
        <tissue>Spleen</tissue>
    </source>
</reference>
<reference key="6">
    <citation type="journal article" date="2014" name="Am. J. Hum. Genet.">
        <title>Mutations in TBC1D24, a gene associated with epilepsy, also cause nonsyndromic deafness DFNB86.</title>
        <authorList>
            <consortium name="University of Washington Center for Mendelian Genomics"/>
            <person name="Rehman A.U."/>
            <person name="Santos-Cortez R.L."/>
            <person name="Morell R.J."/>
            <person name="Drummond M.C."/>
            <person name="Ito T."/>
            <person name="Lee K."/>
            <person name="Khan A.A."/>
            <person name="Basra M.A."/>
            <person name="Wasif N."/>
            <person name="Ayub M."/>
            <person name="Ali R.A."/>
            <person name="Raza S.I."/>
            <person name="Nickerson D.A."/>
            <person name="Shendure J."/>
            <person name="Bamshad M."/>
            <person name="Riazuddin S."/>
            <person name="Billington N."/>
            <person name="Khan S.N."/>
            <person name="Friedman P.L."/>
            <person name="Griffith A.J."/>
            <person name="Ahmad W."/>
            <person name="Riazuddin S."/>
            <person name="Leal S.M."/>
            <person name="Friedman T.B."/>
        </authorList>
    </citation>
    <scope>TISSUE SPECIFICITY</scope>
</reference>
<keyword id="KW-0025">Alternative splicing</keyword>
<keyword id="KW-1003">Cell membrane</keyword>
<keyword id="KW-0966">Cell projection</keyword>
<keyword id="KW-0963">Cytoplasm</keyword>
<keyword id="KW-0968">Cytoplasmic vesicle</keyword>
<keyword id="KW-0343">GTPase activation</keyword>
<keyword id="KW-0472">Membrane</keyword>
<keyword id="KW-0597">Phosphoprotein</keyword>
<keyword id="KW-1185">Reference proteome</keyword>
<keyword id="KW-0770">Synapse</keyword>
<proteinExistence type="evidence at protein level"/>
<comment type="function">
    <text evidence="1 4">May act as a GTPase-activating protein for Rab family protein(s) (PubMed:20727515). Involved in neuronal projections development, probably through a negative modulation of ARF6 function (PubMed:20727515). Involved in the regulation of synaptic vesicle trafficking (By similarity).</text>
</comment>
<comment type="subunit">
    <text evidence="1">Interacts with ARF6.</text>
</comment>
<comment type="subcellular location">
    <subcellularLocation>
        <location evidence="1">Cell membrane</location>
        <topology evidence="1">Peripheral membrane protein</topology>
    </subcellularLocation>
    <subcellularLocation>
        <location evidence="1">Cytoplasm</location>
    </subcellularLocation>
    <subcellularLocation>
        <location evidence="2">Cytoplasmic vesicle membrane</location>
    </subcellularLocation>
    <subcellularLocation>
        <location evidence="1">Presynapse</location>
    </subcellularLocation>
    <text evidence="1 2">Mainly cytoplasmic with partial expression at the plasma membrane (By similarity). Associates with certain types of membrane phosphoinositides, preferentially those phosphorylated at the D5 position of the inositol ring such as phosphatidylinositol 4,5-bisphosphate (PIP2) and phosphatidylinositol 3,4,5-trisphosphate (PIP3) (By similarity).</text>
</comment>
<comment type="alternative products">
    <event type="alternative splicing"/>
    <isoform>
        <id>Q3UUG6-1</id>
        <name>1</name>
        <sequence type="displayed"/>
    </isoform>
    <isoform>
        <id>Q3UUG6-2</id>
        <name>2</name>
        <sequence type="described" ref="VSP_025702"/>
    </isoform>
</comment>
<comment type="tissue specificity">
    <text evidence="4 5">Expressed in brain, particularly at the level of the cortex and the hippocampus. Expressed in the inner ear in spiral ganglion cells, a collection of neurons critical for hearing and balance.</text>
</comment>
<comment type="domain">
    <text evidence="2">The Rab-GAP TBC domain is essential for phosphatidylinositol binding.</text>
</comment>
<comment type="sequence caution" evidence="9">
    <conflict type="frameshift">
        <sequence resource="EMBL-CDS" id="BAC39035"/>
    </conflict>
</comment>
<comment type="sequence caution" evidence="9">
    <conflict type="erroneous initiation">
        <sequence resource="EMBL-CDS" id="BAC98114"/>
    </conflict>
</comment>
<feature type="chain" id="PRO_0000288505" description="TBC1 domain family member 24">
    <location>
        <begin position="1"/>
        <end position="561"/>
    </location>
</feature>
<feature type="domain" description="Rab-GAP TBC">
    <location>
        <begin position="45"/>
        <end position="236"/>
    </location>
</feature>
<feature type="domain" description="TLDc" evidence="3">
    <location>
        <begin position="343"/>
        <end position="556"/>
    </location>
</feature>
<feature type="binding site" evidence="2">
    <location>
        <position position="36"/>
    </location>
    <ligand>
        <name>a 1,2-diacyl-sn-glycero-3-phospho-(1D-myo-inositol)</name>
        <dbReference type="ChEBI" id="CHEBI:57880"/>
    </ligand>
</feature>
<feature type="binding site" evidence="2">
    <location>
        <position position="40"/>
    </location>
    <ligand>
        <name>a 1,2-diacyl-sn-glycero-3-phospho-(1D-myo-inositol)</name>
        <dbReference type="ChEBI" id="CHEBI:57880"/>
    </ligand>
</feature>
<feature type="binding site" evidence="2">
    <location>
        <position position="238"/>
    </location>
    <ligand>
        <name>a 1,2-diacyl-sn-glycero-3-phospho-(1D-myo-inositol)</name>
        <dbReference type="ChEBI" id="CHEBI:57880"/>
    </ligand>
</feature>
<feature type="binding site" evidence="2">
    <location>
        <position position="242"/>
    </location>
    <ligand>
        <name>a 1,2-diacyl-sn-glycero-3-phospho-(1D-myo-inositol)</name>
        <dbReference type="ChEBI" id="CHEBI:57880"/>
    </ligand>
</feature>
<feature type="binding site" evidence="2">
    <location>
        <begin position="293"/>
        <end position="297"/>
    </location>
    <ligand>
        <name>a 1,2-diacyl-sn-glycero-3-phospho-(1D-myo-inositol)</name>
        <dbReference type="ChEBI" id="CHEBI:57880"/>
    </ligand>
</feature>
<feature type="modified residue" description="Phosphoserine" evidence="1">
    <location>
        <position position="475"/>
    </location>
</feature>
<feature type="modified residue" description="Phosphoserine" evidence="10">
    <location>
        <position position="482"/>
    </location>
</feature>
<feature type="splice variant" id="VSP_025702" description="In isoform 2." evidence="6 7 8">
    <location>
        <begin position="322"/>
        <end position="327"/>
    </location>
</feature>
<feature type="sequence conflict" description="In Ref. 2; BAE23659." evidence="9" ref="2">
    <original>P</original>
    <variation>H</variation>
    <location>
        <position position="3"/>
    </location>
</feature>
<feature type="sequence conflict" description="In Ref. 2; BAE36174." evidence="9" ref="2">
    <original>K</original>
    <variation>R</variation>
    <location>
        <position position="14"/>
    </location>
</feature>
<feature type="sequence conflict" description="In Ref. 2; BAC39644." evidence="9" ref="2">
    <original>K</original>
    <variation>E</variation>
    <location>
        <position position="266"/>
    </location>
</feature>
<feature type="sequence conflict" description="In Ref. 2; BAC39255." evidence="9" ref="2">
    <original>E</original>
    <variation>G</variation>
    <location>
        <position position="308"/>
    </location>
</feature>
<feature type="sequence conflict" description="In Ref. 1; BAC98114." evidence="9" ref="1">
    <original>S</original>
    <variation>G</variation>
    <location>
        <position position="471"/>
    </location>
</feature>
<feature type="sequence conflict" description="In Ref. 2; BAE28046." evidence="9" ref="2">
    <original>N</original>
    <variation>I</variation>
    <location>
        <position position="505"/>
    </location>
</feature>
<organism>
    <name type="scientific">Mus musculus</name>
    <name type="common">Mouse</name>
    <dbReference type="NCBI Taxonomy" id="10090"/>
    <lineage>
        <taxon>Eukaryota</taxon>
        <taxon>Metazoa</taxon>
        <taxon>Chordata</taxon>
        <taxon>Craniata</taxon>
        <taxon>Vertebrata</taxon>
        <taxon>Euteleostomi</taxon>
        <taxon>Mammalia</taxon>
        <taxon>Eutheria</taxon>
        <taxon>Euarchontoglires</taxon>
        <taxon>Glires</taxon>
        <taxon>Rodentia</taxon>
        <taxon>Myomorpha</taxon>
        <taxon>Muroidea</taxon>
        <taxon>Muridae</taxon>
        <taxon>Murinae</taxon>
        <taxon>Mus</taxon>
        <taxon>Mus</taxon>
    </lineage>
</organism>
<evidence type="ECO:0000250" key="1">
    <source>
        <dbReference type="UniProtKB" id="Q9ULP9"/>
    </source>
</evidence>
<evidence type="ECO:0000250" key="2">
    <source>
        <dbReference type="UniProtKB" id="Q9VIH7"/>
    </source>
</evidence>
<evidence type="ECO:0000255" key="3">
    <source>
        <dbReference type="PROSITE-ProRule" id="PRU01234"/>
    </source>
</evidence>
<evidence type="ECO:0000269" key="4">
    <source>
    </source>
</evidence>
<evidence type="ECO:0000269" key="5">
    <source>
    </source>
</evidence>
<evidence type="ECO:0000303" key="6">
    <source>
    </source>
</evidence>
<evidence type="ECO:0000303" key="7">
    <source>
    </source>
</evidence>
<evidence type="ECO:0000303" key="8">
    <source>
    </source>
</evidence>
<evidence type="ECO:0000305" key="9"/>
<evidence type="ECO:0007744" key="10">
    <source>
    </source>
</evidence>
<dbReference type="EMBL" id="AK129304">
    <property type="protein sequence ID" value="BAC98114.1"/>
    <property type="status" value="ALT_INIT"/>
    <property type="molecule type" value="mRNA"/>
</dbReference>
<dbReference type="EMBL" id="AK049306">
    <property type="protein sequence ID" value="BAC33671.1"/>
    <property type="molecule type" value="mRNA"/>
</dbReference>
<dbReference type="EMBL" id="AK049754">
    <property type="protein sequence ID" value="BAC33904.1"/>
    <property type="molecule type" value="mRNA"/>
</dbReference>
<dbReference type="EMBL" id="AK083833">
    <property type="protein sequence ID" value="BAC39035.1"/>
    <property type="status" value="ALT_FRAME"/>
    <property type="molecule type" value="mRNA"/>
</dbReference>
<dbReference type="EMBL" id="AK084693">
    <property type="protein sequence ID" value="BAC39255.1"/>
    <property type="molecule type" value="mRNA"/>
</dbReference>
<dbReference type="EMBL" id="AK086293">
    <property type="protein sequence ID" value="BAC39644.1"/>
    <property type="molecule type" value="mRNA"/>
</dbReference>
<dbReference type="EMBL" id="AK138431">
    <property type="protein sequence ID" value="BAE23659.1"/>
    <property type="molecule type" value="mRNA"/>
</dbReference>
<dbReference type="EMBL" id="AK147647">
    <property type="protein sequence ID" value="BAE28046.1"/>
    <property type="molecule type" value="mRNA"/>
</dbReference>
<dbReference type="EMBL" id="AK161054">
    <property type="protein sequence ID" value="BAE36174.1"/>
    <property type="molecule type" value="mRNA"/>
</dbReference>
<dbReference type="EMBL" id="BC080845">
    <property type="protein sequence ID" value="AAH80845.1"/>
    <property type="molecule type" value="mRNA"/>
</dbReference>
<dbReference type="EMBL" id="BC094417">
    <property type="protein sequence ID" value="AAH94417.1"/>
    <property type="molecule type" value="mRNA"/>
</dbReference>
<dbReference type="CCDS" id="CCDS28477.1">
    <molecule id="Q3UUG6-2"/>
</dbReference>
<dbReference type="CCDS" id="CCDS50012.1">
    <molecule id="Q3UUG6-1"/>
</dbReference>
<dbReference type="RefSeq" id="NP_001157319.1">
    <molecule id="Q3UUG6-1"/>
    <property type="nucleotide sequence ID" value="NM_001163847.1"/>
</dbReference>
<dbReference type="RefSeq" id="NP_001157320.1">
    <molecule id="Q3UUG6-1"/>
    <property type="nucleotide sequence ID" value="NM_001163848.1"/>
</dbReference>
<dbReference type="RefSeq" id="NP_001157321.1">
    <molecule id="Q3UUG6-1"/>
    <property type="nucleotide sequence ID" value="NM_001163849.1"/>
</dbReference>
<dbReference type="RefSeq" id="NP_001157322.1">
    <molecule id="Q3UUG6-2"/>
    <property type="nucleotide sequence ID" value="NM_001163850.1"/>
</dbReference>
<dbReference type="RefSeq" id="NP_001157323.1">
    <molecule id="Q3UUG6-2"/>
    <property type="nucleotide sequence ID" value="NM_001163851.1"/>
</dbReference>
<dbReference type="RefSeq" id="NP_001157324.1">
    <molecule id="Q3UUG6-2"/>
    <property type="nucleotide sequence ID" value="NM_001163852.1"/>
</dbReference>
<dbReference type="RefSeq" id="NP_001157325.1">
    <molecule id="Q3UUG6-2"/>
    <property type="nucleotide sequence ID" value="NM_001163853.1"/>
</dbReference>
<dbReference type="RefSeq" id="NP_775278.3">
    <molecule id="Q3UUG6-2"/>
    <property type="nucleotide sequence ID" value="NM_173186.4"/>
</dbReference>
<dbReference type="SMR" id="Q3UUG6"/>
<dbReference type="BioGRID" id="230289">
    <property type="interactions" value="3"/>
</dbReference>
<dbReference type="FunCoup" id="Q3UUG6">
    <property type="interactions" value="510"/>
</dbReference>
<dbReference type="STRING" id="10090.ENSMUSP00000094989"/>
<dbReference type="GlyGen" id="Q3UUG6">
    <property type="glycosylation" value="1 site, 1 O-linked glycan (1 site)"/>
</dbReference>
<dbReference type="iPTMnet" id="Q3UUG6"/>
<dbReference type="PhosphoSitePlus" id="Q3UUG6"/>
<dbReference type="SwissPalm" id="Q3UUG6"/>
<dbReference type="PaxDb" id="10090-ENSMUSP00000127005"/>
<dbReference type="PeptideAtlas" id="Q3UUG6"/>
<dbReference type="ProteomicsDB" id="254825">
    <molecule id="Q3UUG6-1"/>
</dbReference>
<dbReference type="ProteomicsDB" id="254826">
    <molecule id="Q3UUG6-2"/>
</dbReference>
<dbReference type="Pumba" id="Q3UUG6"/>
<dbReference type="DNASU" id="224617"/>
<dbReference type="Ensembl" id="ENSMUST00000040474.11">
    <molecule id="Q3UUG6-2"/>
    <property type="protein sequence ID" value="ENSMUSP00000036458.8"/>
    <property type="gene ID" value="ENSMUSG00000036473.17"/>
</dbReference>
<dbReference type="Ensembl" id="ENSMUST00000097376.10">
    <molecule id="Q3UUG6-1"/>
    <property type="protein sequence ID" value="ENSMUSP00000094989.4"/>
    <property type="gene ID" value="ENSMUSG00000036473.17"/>
</dbReference>
<dbReference type="Ensembl" id="ENSMUST00000167791.9">
    <molecule id="Q3UUG6-1"/>
    <property type="protein sequence ID" value="ENSMUSP00000127005.3"/>
    <property type="gene ID" value="ENSMUSG00000036473.17"/>
</dbReference>
<dbReference type="Ensembl" id="ENSMUST00000168378.8">
    <molecule id="Q3UUG6-2"/>
    <property type="protein sequence ID" value="ENSMUSP00000126107.2"/>
    <property type="gene ID" value="ENSMUSG00000036473.17"/>
</dbReference>
<dbReference type="Ensembl" id="ENSMUST00000168410.9">
    <molecule id="Q3UUG6-2"/>
    <property type="protein sequence ID" value="ENSMUSP00000128868.3"/>
    <property type="gene ID" value="ENSMUSG00000036473.17"/>
</dbReference>
<dbReference type="Ensembl" id="ENSMUST00000171189.8">
    <molecule id="Q3UUG6-2"/>
    <property type="protein sequence ID" value="ENSMUSP00000128001.2"/>
    <property type="gene ID" value="ENSMUSG00000036473.17"/>
</dbReference>
<dbReference type="Ensembl" id="ENSMUST00000201089.4">
    <molecule id="Q3UUG6-2"/>
    <property type="protein sequence ID" value="ENSMUSP00000144250.2"/>
    <property type="gene ID" value="ENSMUSG00000036473.17"/>
</dbReference>
<dbReference type="Ensembl" id="ENSMUST00000201301.4">
    <molecule id="Q3UUG6-1"/>
    <property type="protein sequence ID" value="ENSMUSP00000143949.2"/>
    <property type="gene ID" value="ENSMUSG00000036473.17"/>
</dbReference>
<dbReference type="Ensembl" id="ENSMUST00000201805.4">
    <molecule id="Q3UUG6-1"/>
    <property type="protein sequence ID" value="ENSMUSP00000143883.2"/>
    <property type="gene ID" value="ENSMUSG00000036473.17"/>
</dbReference>
<dbReference type="Ensembl" id="ENSMUST00000201960.4">
    <molecule id="Q3UUG6-2"/>
    <property type="protein sequence ID" value="ENSMUSP00000144208.2"/>
    <property type="gene ID" value="ENSMUSG00000036473.17"/>
</dbReference>
<dbReference type="Ensembl" id="ENSMUST00000202925.4">
    <molecule id="Q3UUG6-2"/>
    <property type="protein sequence ID" value="ENSMUSP00000144575.2"/>
    <property type="gene ID" value="ENSMUSG00000036473.17"/>
</dbReference>
<dbReference type="GeneID" id="224617"/>
<dbReference type="KEGG" id="mmu:224617"/>
<dbReference type="UCSC" id="uc008auq.2">
    <molecule id="Q3UUG6-1"/>
    <property type="organism name" value="mouse"/>
</dbReference>
<dbReference type="UCSC" id="uc008aus.2">
    <molecule id="Q3UUG6-2"/>
    <property type="organism name" value="mouse"/>
</dbReference>
<dbReference type="AGR" id="MGI:2443456"/>
<dbReference type="CTD" id="57465"/>
<dbReference type="MGI" id="MGI:2443456">
    <property type="gene designation" value="Tbc1d24"/>
</dbReference>
<dbReference type="VEuPathDB" id="HostDB:ENSMUSG00000036473"/>
<dbReference type="eggNOG" id="KOG2801">
    <property type="taxonomic scope" value="Eukaryota"/>
</dbReference>
<dbReference type="GeneTree" id="ENSGT00410000025739"/>
<dbReference type="HOGENOM" id="CLU_018035_1_1_1"/>
<dbReference type="InParanoid" id="Q3UUG6"/>
<dbReference type="OMA" id="NTSMFMS"/>
<dbReference type="OrthoDB" id="10065050at2759"/>
<dbReference type="PhylomeDB" id="Q3UUG6"/>
<dbReference type="TreeFam" id="TF315420"/>
<dbReference type="Reactome" id="R-MMU-8854214">
    <property type="pathway name" value="TBC/RABGAPs"/>
</dbReference>
<dbReference type="BioGRID-ORCS" id="224617">
    <property type="hits" value="3 hits in 78 CRISPR screens"/>
</dbReference>
<dbReference type="CD-CODE" id="CE726F99">
    <property type="entry name" value="Postsynaptic density"/>
</dbReference>
<dbReference type="ChiTaRS" id="Tbc1d24">
    <property type="organism name" value="mouse"/>
</dbReference>
<dbReference type="PRO" id="PR:Q3UUG6"/>
<dbReference type="Proteomes" id="UP000000589">
    <property type="component" value="Chromosome 17"/>
</dbReference>
<dbReference type="RNAct" id="Q3UUG6">
    <property type="molecule type" value="protein"/>
</dbReference>
<dbReference type="Bgee" id="ENSMUSG00000036473">
    <property type="expression patterns" value="Expressed in pigmented layer of retina and 263 other cell types or tissues"/>
</dbReference>
<dbReference type="ExpressionAtlas" id="Q3UUG6">
    <property type="expression patterns" value="baseline and differential"/>
</dbReference>
<dbReference type="GO" id="GO:0030659">
    <property type="term" value="C:cytoplasmic vesicle membrane"/>
    <property type="evidence" value="ECO:0007669"/>
    <property type="project" value="UniProtKB-SubCell"/>
</dbReference>
<dbReference type="GO" id="GO:0031594">
    <property type="term" value="C:neuromuscular junction"/>
    <property type="evidence" value="ECO:0000250"/>
    <property type="project" value="ParkinsonsUK-UCL"/>
</dbReference>
<dbReference type="GO" id="GO:0005886">
    <property type="term" value="C:plasma membrane"/>
    <property type="evidence" value="ECO:0007669"/>
    <property type="project" value="UniProtKB-SubCell"/>
</dbReference>
<dbReference type="GO" id="GO:0043195">
    <property type="term" value="C:terminal bouton"/>
    <property type="evidence" value="ECO:0000250"/>
    <property type="project" value="ParkinsonsUK-UCL"/>
</dbReference>
<dbReference type="GO" id="GO:0005096">
    <property type="term" value="F:GTPase activator activity"/>
    <property type="evidence" value="ECO:0007669"/>
    <property type="project" value="UniProtKB-KW"/>
</dbReference>
<dbReference type="GO" id="GO:0061564">
    <property type="term" value="P:axon development"/>
    <property type="evidence" value="ECO:0000315"/>
    <property type="project" value="MGI"/>
</dbReference>
<dbReference type="GO" id="GO:0034599">
    <property type="term" value="P:cellular response to oxidative stress"/>
    <property type="evidence" value="ECO:0000315"/>
    <property type="project" value="MGI"/>
</dbReference>
<dbReference type="GO" id="GO:0016358">
    <property type="term" value="P:dendrite development"/>
    <property type="evidence" value="ECO:0000315"/>
    <property type="project" value="MGI"/>
</dbReference>
<dbReference type="GO" id="GO:1900408">
    <property type="term" value="P:negative regulation of cellular response to oxidative stress"/>
    <property type="evidence" value="ECO:0000314"/>
    <property type="project" value="MGI"/>
</dbReference>
<dbReference type="GO" id="GO:0031175">
    <property type="term" value="P:neuron projection development"/>
    <property type="evidence" value="ECO:0000315"/>
    <property type="project" value="MGI"/>
</dbReference>
<dbReference type="GO" id="GO:0050775">
    <property type="term" value="P:positive regulation of dendrite morphogenesis"/>
    <property type="evidence" value="ECO:0007669"/>
    <property type="project" value="Ensembl"/>
</dbReference>
<dbReference type="GO" id="GO:2000463">
    <property type="term" value="P:positive regulation of excitatory postsynaptic potential"/>
    <property type="evidence" value="ECO:0007669"/>
    <property type="project" value="Ensembl"/>
</dbReference>
<dbReference type="GO" id="GO:2001224">
    <property type="term" value="P:positive regulation of neuron migration"/>
    <property type="evidence" value="ECO:0007669"/>
    <property type="project" value="Ensembl"/>
</dbReference>
<dbReference type="GO" id="GO:0048488">
    <property type="term" value="P:synaptic vesicle endocytosis"/>
    <property type="evidence" value="ECO:0000315"/>
    <property type="project" value="MGI"/>
</dbReference>
<dbReference type="FunFam" id="1.10.472.80:FF:000032">
    <property type="entry name" value="TBC1 domain family member 24 isoform X1"/>
    <property type="match status" value="1"/>
</dbReference>
<dbReference type="Gene3D" id="1.10.472.80">
    <property type="entry name" value="Ypt/Rab-GAP domain of gyp1p, domain 3"/>
    <property type="match status" value="1"/>
</dbReference>
<dbReference type="InterPro" id="IPR000195">
    <property type="entry name" value="Rab-GAP-TBC_dom"/>
</dbReference>
<dbReference type="InterPro" id="IPR035969">
    <property type="entry name" value="Rab-GAP_TBC_sf"/>
</dbReference>
<dbReference type="InterPro" id="IPR006571">
    <property type="entry name" value="TLDc_dom"/>
</dbReference>
<dbReference type="PANTHER" id="PTHR23354:SF122">
    <property type="entry name" value="GTPASE-ACTIVATING PROTEIN SKYWALKER"/>
    <property type="match status" value="1"/>
</dbReference>
<dbReference type="PANTHER" id="PTHR23354">
    <property type="entry name" value="NUCLEOLAR PROTEIN 7/ESTROGEN RECEPTOR COACTIVATOR-RELATED"/>
    <property type="match status" value="1"/>
</dbReference>
<dbReference type="Pfam" id="PF00566">
    <property type="entry name" value="RabGAP-TBC"/>
    <property type="match status" value="1"/>
</dbReference>
<dbReference type="Pfam" id="PF07534">
    <property type="entry name" value="TLD"/>
    <property type="match status" value="1"/>
</dbReference>
<dbReference type="SMART" id="SM00164">
    <property type="entry name" value="TBC"/>
    <property type="match status" value="1"/>
</dbReference>
<dbReference type="SMART" id="SM00584">
    <property type="entry name" value="TLDc"/>
    <property type="match status" value="1"/>
</dbReference>
<dbReference type="SUPFAM" id="SSF47923">
    <property type="entry name" value="Ypt/Rab-GAP domain of gyp1p"/>
    <property type="match status" value="2"/>
</dbReference>
<dbReference type="PROSITE" id="PS51886">
    <property type="entry name" value="TLDC"/>
    <property type="match status" value="1"/>
</dbReference>
<sequence length="561" mass="63236">MDPPGYNCFVDKDKMDASIQDLGPKELNCTELQELKQLARQGYWAQSHTLRGKVYQRLIRDIPCRTVTPDASVYSDIVGKIVGKHSSSSLPLPEFVDNTQVPTYCLNTRGEGAVRKILLCIANQFPDISFCPALPAVVALLLHYSIDEAECFEKACRILSCNDPTKKLIDQSFLAFESSCMTFGDLVNKYCQAAHKLMVAVSEDVLQVYSDWQRWLFGELPLNYFARVFDVFLVEGYKVLYRVALAILKFFHKVRAGQPLESDNVKQDIRMFVKDIAKTVSPEKLLEKAFAIRLFSRKEIQLLQMANEKALRQKGITVKQKSVSLSKRQFVHLAVHAENFHSEIVSVKEMRDIWSWIPERFALCQPLLLFSSLQHGYSLSRFYFQCEGHEPTLLLIKTTQKEVCGAYLSTDWSERTKFGGKLGFFGTGECFVFRLQPEVQRYEWVVIKHPELTKATSLKSSEAAGSSSLISHCSSDPADRLSPFLAARHFNLPSKTESMFMAGGNDCLIIGGGGGQALYVDGDLNRGRTGHCDTFNNQPLCSENFLIAAVEAWGFQDPDTE</sequence>
<protein>
    <recommendedName>
        <fullName>TBC1 domain family member 24</fullName>
    </recommendedName>
</protein>